<protein>
    <recommendedName>
        <fullName>Probable sulfate transporter Rv1739c</fullName>
    </recommendedName>
</protein>
<name>Y1739_MYCTU</name>
<sequence length="560" mass="59367">MIPTMTSAGWAPGVVQFREYQRRWLRGDVLAGLTVAAYLIPQAMAYATVAGLPPAAGLWASIAPLAIYALLGSSRQLSIGPESATALMTAAVLAPMAAGDLRRYAVLAATLGLLVGLICLLAGTARLGFLASLRSRPVLVGYMAGIALVMISSQLGTITGTSVEGNEFFSEVHSFATSVTRVHWPTFVLAMSVLALLTMLTRWAPRAPGPIIAVLAATMLVAVMSLDAKGIAIVGRIPSGLPTPGVPPVSVEDLRALIIPAAGIAIVTFTDGVLTARAFAARRGQEVNANAELRAVGACNIAAGLTHGFPVSSSSSRTALADVVGGRTQLYSLIALGLVVIVMVFASGLLAMFPIAALGALVVYAALRLIDLSEFRRLARFRRSELMLALATTAAVLGLGVFYGVLAAVALSILELLRRVAHPHDSVLGFVPGIAGMHDIDDYPQAKRVPGLVVYRYDAPLCFANAEDFRRRALTVVDQDPGQVEWFVLNAESNVEVDLTALDALDQLRTELLRRGIVFAMARVKQDLRESLRAASLLDKIGEDHIFMTLPTAVQAFRRR</sequence>
<feature type="chain" id="PRO_0000393282" description="Probable sulfate transporter Rv1739c">
    <location>
        <begin position="1"/>
        <end position="560"/>
    </location>
</feature>
<feature type="transmembrane region" description="Helical" evidence="1">
    <location>
        <begin position="29"/>
        <end position="49"/>
    </location>
</feature>
<feature type="transmembrane region" description="Helical" evidence="1">
    <location>
        <begin position="51"/>
        <end position="71"/>
    </location>
</feature>
<feature type="transmembrane region" description="Helical" evidence="1">
    <location>
        <begin position="79"/>
        <end position="99"/>
    </location>
</feature>
<feature type="transmembrane region" description="Helical" evidence="1">
    <location>
        <begin position="105"/>
        <end position="125"/>
    </location>
</feature>
<feature type="transmembrane region" description="Helical" evidence="1">
    <location>
        <begin position="138"/>
        <end position="158"/>
    </location>
</feature>
<feature type="transmembrane region" description="Helical" evidence="1">
    <location>
        <begin position="184"/>
        <end position="204"/>
    </location>
</feature>
<feature type="transmembrane region" description="Helical" evidence="1">
    <location>
        <begin position="207"/>
        <end position="227"/>
    </location>
</feature>
<feature type="transmembrane region" description="Helical" evidence="1">
    <location>
        <begin position="256"/>
        <end position="276"/>
    </location>
</feature>
<feature type="transmembrane region" description="Helical" evidence="1">
    <location>
        <begin position="333"/>
        <end position="353"/>
    </location>
</feature>
<feature type="transmembrane region" description="Helical" evidence="1">
    <location>
        <begin position="355"/>
        <end position="375"/>
    </location>
</feature>
<feature type="transmembrane region" description="Helical" evidence="1">
    <location>
        <begin position="394"/>
        <end position="414"/>
    </location>
</feature>
<feature type="domain" description="STAS" evidence="2">
    <location>
        <begin position="442"/>
        <end position="557"/>
    </location>
</feature>
<feature type="region of interest" description="Required for sulfate transport in E.coli">
    <location>
        <begin position="1"/>
        <end position="436"/>
    </location>
</feature>
<gene>
    <name type="ordered locus">Rv1739c</name>
</gene>
<proteinExistence type="evidence at protein level"/>
<organism>
    <name type="scientific">Mycobacterium tuberculosis (strain ATCC 25618 / H37Rv)</name>
    <dbReference type="NCBI Taxonomy" id="83332"/>
    <lineage>
        <taxon>Bacteria</taxon>
        <taxon>Bacillati</taxon>
        <taxon>Actinomycetota</taxon>
        <taxon>Actinomycetes</taxon>
        <taxon>Mycobacteriales</taxon>
        <taxon>Mycobacteriaceae</taxon>
        <taxon>Mycobacterium</taxon>
        <taxon>Mycobacterium tuberculosis complex</taxon>
    </lineage>
</organism>
<reference key="1">
    <citation type="journal article" date="1998" name="Nature">
        <title>Deciphering the biology of Mycobacterium tuberculosis from the complete genome sequence.</title>
        <authorList>
            <person name="Cole S.T."/>
            <person name="Brosch R."/>
            <person name="Parkhill J."/>
            <person name="Garnier T."/>
            <person name="Churcher C.M."/>
            <person name="Harris D.E."/>
            <person name="Gordon S.V."/>
            <person name="Eiglmeier K."/>
            <person name="Gas S."/>
            <person name="Barry C.E. III"/>
            <person name="Tekaia F."/>
            <person name="Badcock K."/>
            <person name="Basham D."/>
            <person name="Brown D."/>
            <person name="Chillingworth T."/>
            <person name="Connor R."/>
            <person name="Davies R.M."/>
            <person name="Devlin K."/>
            <person name="Feltwell T."/>
            <person name="Gentles S."/>
            <person name="Hamlin N."/>
            <person name="Holroyd S."/>
            <person name="Hornsby T."/>
            <person name="Jagels K."/>
            <person name="Krogh A."/>
            <person name="McLean J."/>
            <person name="Moule S."/>
            <person name="Murphy L.D."/>
            <person name="Oliver S."/>
            <person name="Osborne J."/>
            <person name="Quail M.A."/>
            <person name="Rajandream M.A."/>
            <person name="Rogers J."/>
            <person name="Rutter S."/>
            <person name="Seeger K."/>
            <person name="Skelton S."/>
            <person name="Squares S."/>
            <person name="Squares R."/>
            <person name="Sulston J.E."/>
            <person name="Taylor K."/>
            <person name="Whitehead S."/>
            <person name="Barrell B.G."/>
        </authorList>
    </citation>
    <scope>NUCLEOTIDE SEQUENCE [LARGE SCALE GENOMIC DNA]</scope>
    <source>
        <strain>ATCC 25618 / H37Rv</strain>
    </source>
</reference>
<reference key="2">
    <citation type="journal article" date="2001" name="Proc. Natl. Acad. Sci. U.S.A.">
        <title>Regulation of the Mycobacterium tuberculosis hypoxic response gene encoding alpha -crystallin.</title>
        <authorList>
            <person name="Sherman D.R."/>
            <person name="Voskuil M."/>
            <person name="Schnappinger D."/>
            <person name="Liao R."/>
            <person name="Harrell M.I."/>
            <person name="Schoolnik G.K."/>
        </authorList>
    </citation>
    <scope>INDUCTION BY HYPOXIA</scope>
    <source>
        <strain>ATCC 25618 / H37Rv</strain>
    </source>
</reference>
<reference key="3">
    <citation type="journal article" date="2008" name="Comp. Biochem. Physiol.">
        <title>Increased sulfate uptake by E. coli overexpressing the SLC26-related SulP protein Rv1739c from Mycobacterium tuberculosis.</title>
        <authorList>
            <person name="Zolotarev A.S."/>
            <person name="Unnikrishnan M."/>
            <person name="Shmukler B.E."/>
            <person name="Clark J.S."/>
            <person name="Vandorpe D.H."/>
            <person name="Grigorieff N."/>
            <person name="Rubin E.J."/>
            <person name="Alper S.L."/>
        </authorList>
    </citation>
    <scope>FUNCTION IN E.COLI</scope>
    <source>
        <strain>ATCC 25618 / H37Rv</strain>
    </source>
</reference>
<reference key="4">
    <citation type="journal article" date="2009" name="Biomol. NMR. Assign.">
        <title>NMR assignment and secondary structure of the STAS domain of Rv1739c, a putative sulfate transporter of Mycobacterium tuberculosis.</title>
        <authorList>
            <person name="Sharma A.K."/>
            <person name="Ye L."/>
            <person name="Zolotarev A.S."/>
            <person name="Alper S.L."/>
            <person name="Rigby A.C."/>
        </authorList>
    </citation>
    <scope>STRUCTURE BY NMR OF 437-560</scope>
</reference>
<keyword id="KW-1003">Cell membrane</keyword>
<keyword id="KW-0472">Membrane</keyword>
<keyword id="KW-1185">Reference proteome</keyword>
<keyword id="KW-0764">Sulfate transport</keyword>
<keyword id="KW-0812">Transmembrane</keyword>
<keyword id="KW-1133">Transmembrane helix</keyword>
<keyword id="KW-0813">Transport</keyword>
<evidence type="ECO:0000255" key="1"/>
<evidence type="ECO:0000255" key="2">
    <source>
        <dbReference type="PROSITE-ProRule" id="PRU00198"/>
    </source>
</evidence>
<evidence type="ECO:0000269" key="3">
    <source>
    </source>
</evidence>
<evidence type="ECO:0000269" key="4">
    <source>
    </source>
</evidence>
<evidence type="ECO:0000305" key="5"/>
<comment type="function">
    <text evidence="4">Expression in E.coli induces sulfate uptake during early- to mid-log phase growth. Uptake is maximal at pH 6.0, is sulfate-specific, requires E.coli CysA and the transmembrane segment but not the STAS domain of the protein.</text>
</comment>
<comment type="subcellular location">
    <subcellularLocation>
        <location evidence="5">Cell membrane</location>
        <topology evidence="5">Multi-pass membrane protein</topology>
    </subcellularLocation>
</comment>
<comment type="induction">
    <text evidence="3">A possible member of the dormancy regulon. Induced in response to reduced oxygen tension (hypoxia). It is hoped that this regulon will give insight into the latent, or dormant phase of infection.</text>
</comment>
<comment type="similarity">
    <text evidence="5">Belongs to the SLC26A/SulP transporter (TC 2.A.53) family.</text>
</comment>
<dbReference type="EMBL" id="AL123456">
    <property type="protein sequence ID" value="CCP44505.1"/>
    <property type="molecule type" value="Genomic_DNA"/>
</dbReference>
<dbReference type="PIR" id="F70688">
    <property type="entry name" value="F70688"/>
</dbReference>
<dbReference type="RefSeq" id="NP_216255.1">
    <property type="nucleotide sequence ID" value="NC_000962.3"/>
</dbReference>
<dbReference type="RefSeq" id="WP_003916850.1">
    <property type="nucleotide sequence ID" value="NZ_NVQJ01000010.1"/>
</dbReference>
<dbReference type="BMRB" id="P9WGF7"/>
<dbReference type="SMR" id="P9WGF7"/>
<dbReference type="FunCoup" id="P9WGF7">
    <property type="interactions" value="173"/>
</dbReference>
<dbReference type="STRING" id="83332.Rv1739c"/>
<dbReference type="PaxDb" id="83332-Rv1739c"/>
<dbReference type="DNASU" id="887208"/>
<dbReference type="GeneID" id="887208"/>
<dbReference type="KEGG" id="mtu:Rv1739c"/>
<dbReference type="KEGG" id="mtv:RVBD_1739c"/>
<dbReference type="TubercuList" id="Rv1739c"/>
<dbReference type="eggNOG" id="COG0659">
    <property type="taxonomic scope" value="Bacteria"/>
</dbReference>
<dbReference type="InParanoid" id="P9WGF7"/>
<dbReference type="OrthoDB" id="9769739at2"/>
<dbReference type="PhylomeDB" id="P9WGF7"/>
<dbReference type="Proteomes" id="UP000001584">
    <property type="component" value="Chromosome"/>
</dbReference>
<dbReference type="GO" id="GO:0005886">
    <property type="term" value="C:plasma membrane"/>
    <property type="evidence" value="ECO:0007005"/>
    <property type="project" value="MTBBASE"/>
</dbReference>
<dbReference type="GO" id="GO:0019001">
    <property type="term" value="F:guanyl nucleotide binding"/>
    <property type="evidence" value="ECO:0000314"/>
    <property type="project" value="MTBBASE"/>
</dbReference>
<dbReference type="GO" id="GO:0000103">
    <property type="term" value="P:sulfate assimilation"/>
    <property type="evidence" value="ECO:0000315"/>
    <property type="project" value="MTBBASE"/>
</dbReference>
<dbReference type="GO" id="GO:0055085">
    <property type="term" value="P:transmembrane transport"/>
    <property type="evidence" value="ECO:0007669"/>
    <property type="project" value="InterPro"/>
</dbReference>
<dbReference type="CDD" id="cd07042">
    <property type="entry name" value="STAS_SulP_like_sulfate_transporter"/>
    <property type="match status" value="1"/>
</dbReference>
<dbReference type="Gene3D" id="3.30.750.24">
    <property type="entry name" value="STAS domain"/>
    <property type="match status" value="1"/>
</dbReference>
<dbReference type="InterPro" id="IPR011547">
    <property type="entry name" value="SLC26A/SulP_dom"/>
</dbReference>
<dbReference type="InterPro" id="IPR001902">
    <property type="entry name" value="SLC26A/SulP_fam"/>
</dbReference>
<dbReference type="InterPro" id="IPR002645">
    <property type="entry name" value="STAS_dom"/>
</dbReference>
<dbReference type="InterPro" id="IPR036513">
    <property type="entry name" value="STAS_dom_sf"/>
</dbReference>
<dbReference type="NCBIfam" id="TIGR00815">
    <property type="entry name" value="sulP"/>
    <property type="match status" value="1"/>
</dbReference>
<dbReference type="PANTHER" id="PTHR11814">
    <property type="entry name" value="SULFATE TRANSPORTER"/>
    <property type="match status" value="1"/>
</dbReference>
<dbReference type="Pfam" id="PF01740">
    <property type="entry name" value="STAS"/>
    <property type="match status" value="1"/>
</dbReference>
<dbReference type="Pfam" id="PF00916">
    <property type="entry name" value="Sulfate_transp"/>
    <property type="match status" value="1"/>
</dbReference>
<dbReference type="SUPFAM" id="SSF52091">
    <property type="entry name" value="SpoIIaa-like"/>
    <property type="match status" value="1"/>
</dbReference>
<dbReference type="PROSITE" id="PS00211">
    <property type="entry name" value="ABC_TRANSPORTER_1"/>
    <property type="match status" value="1"/>
</dbReference>
<dbReference type="PROSITE" id="PS50801">
    <property type="entry name" value="STAS"/>
    <property type="match status" value="1"/>
</dbReference>
<accession>P9WGF7</accession>
<accession>L0T947</accession>
<accession>P71997</accession>
<accession>Q7D819</accession>